<accession>A0PPH0</accession>
<dbReference type="EC" id="4.2.3.5" evidence="1"/>
<dbReference type="EMBL" id="CP000325">
    <property type="protein sequence ID" value="ABL04239.1"/>
    <property type="molecule type" value="Genomic_DNA"/>
</dbReference>
<dbReference type="RefSeq" id="WP_011739859.1">
    <property type="nucleotide sequence ID" value="NC_008611.1"/>
</dbReference>
<dbReference type="SMR" id="A0PPH0"/>
<dbReference type="KEGG" id="mul:MUL_1759"/>
<dbReference type="eggNOG" id="COG0082">
    <property type="taxonomic scope" value="Bacteria"/>
</dbReference>
<dbReference type="HOGENOM" id="CLU_034547_2_0_11"/>
<dbReference type="UniPathway" id="UPA00053">
    <property type="reaction ID" value="UER00090"/>
</dbReference>
<dbReference type="Proteomes" id="UP000000765">
    <property type="component" value="Chromosome"/>
</dbReference>
<dbReference type="GO" id="GO:0005829">
    <property type="term" value="C:cytosol"/>
    <property type="evidence" value="ECO:0007669"/>
    <property type="project" value="TreeGrafter"/>
</dbReference>
<dbReference type="GO" id="GO:0004107">
    <property type="term" value="F:chorismate synthase activity"/>
    <property type="evidence" value="ECO:0007669"/>
    <property type="project" value="UniProtKB-UniRule"/>
</dbReference>
<dbReference type="GO" id="GO:0010181">
    <property type="term" value="F:FMN binding"/>
    <property type="evidence" value="ECO:0007669"/>
    <property type="project" value="TreeGrafter"/>
</dbReference>
<dbReference type="GO" id="GO:0008652">
    <property type="term" value="P:amino acid biosynthetic process"/>
    <property type="evidence" value="ECO:0007669"/>
    <property type="project" value="UniProtKB-KW"/>
</dbReference>
<dbReference type="GO" id="GO:0009073">
    <property type="term" value="P:aromatic amino acid family biosynthetic process"/>
    <property type="evidence" value="ECO:0007669"/>
    <property type="project" value="UniProtKB-KW"/>
</dbReference>
<dbReference type="GO" id="GO:0009423">
    <property type="term" value="P:chorismate biosynthetic process"/>
    <property type="evidence" value="ECO:0007669"/>
    <property type="project" value="UniProtKB-UniRule"/>
</dbReference>
<dbReference type="CDD" id="cd07304">
    <property type="entry name" value="Chorismate_synthase"/>
    <property type="match status" value="1"/>
</dbReference>
<dbReference type="FunFam" id="3.60.150.10:FF:000002">
    <property type="entry name" value="Chorismate synthase"/>
    <property type="match status" value="1"/>
</dbReference>
<dbReference type="Gene3D" id="3.60.150.10">
    <property type="entry name" value="Chorismate synthase AroC"/>
    <property type="match status" value="1"/>
</dbReference>
<dbReference type="HAMAP" id="MF_00300">
    <property type="entry name" value="Chorismate_synth"/>
    <property type="match status" value="1"/>
</dbReference>
<dbReference type="InterPro" id="IPR000453">
    <property type="entry name" value="Chorismate_synth"/>
</dbReference>
<dbReference type="InterPro" id="IPR035904">
    <property type="entry name" value="Chorismate_synth_AroC_sf"/>
</dbReference>
<dbReference type="InterPro" id="IPR020541">
    <property type="entry name" value="Chorismate_synthase_CS"/>
</dbReference>
<dbReference type="NCBIfam" id="TIGR00033">
    <property type="entry name" value="aroC"/>
    <property type="match status" value="1"/>
</dbReference>
<dbReference type="NCBIfam" id="NF003793">
    <property type="entry name" value="PRK05382.1"/>
    <property type="match status" value="1"/>
</dbReference>
<dbReference type="PANTHER" id="PTHR21085">
    <property type="entry name" value="CHORISMATE SYNTHASE"/>
    <property type="match status" value="1"/>
</dbReference>
<dbReference type="PANTHER" id="PTHR21085:SF0">
    <property type="entry name" value="CHORISMATE SYNTHASE"/>
    <property type="match status" value="1"/>
</dbReference>
<dbReference type="Pfam" id="PF01264">
    <property type="entry name" value="Chorismate_synt"/>
    <property type="match status" value="1"/>
</dbReference>
<dbReference type="PIRSF" id="PIRSF001456">
    <property type="entry name" value="Chorismate_synth"/>
    <property type="match status" value="1"/>
</dbReference>
<dbReference type="SUPFAM" id="SSF103263">
    <property type="entry name" value="Chorismate synthase, AroC"/>
    <property type="match status" value="1"/>
</dbReference>
<dbReference type="PROSITE" id="PS00787">
    <property type="entry name" value="CHORISMATE_SYNTHASE_1"/>
    <property type="match status" value="1"/>
</dbReference>
<dbReference type="PROSITE" id="PS00788">
    <property type="entry name" value="CHORISMATE_SYNTHASE_2"/>
    <property type="match status" value="1"/>
</dbReference>
<dbReference type="PROSITE" id="PS00789">
    <property type="entry name" value="CHORISMATE_SYNTHASE_3"/>
    <property type="match status" value="1"/>
</dbReference>
<gene>
    <name evidence="1" type="primary">aroC</name>
    <name type="ordered locus">MUL_1759</name>
</gene>
<name>AROC_MYCUA</name>
<sequence>MLRWITAGESHGRALVALVDGMVAGVEVTSTEIADQLARRRLGYGRGARMAFERDAVTVLSGIRHGSTLGGPIAIEIGNTEWPKWEAVMAADPLDPAAAAELENSARNAPLTRPRPGHADYAGMLKYGFDDARPVLERASARETAARVAAGTVARAFLRQALGVEVLSHVVSIGASAPYDGPPPQPEDLLAIDASPVRAFDGQAEKSMIAEIEAAKKDGDTLGGVVEVVALGLPVGLGSFTSGENRLDSQLAAAVMGIQAIKGVEIGDGFETARRRGSRAHDEMYPGTDGVVRSTNRAGGLEGGMTNGQPLRVRAAMKPISTVPKALATVDLATGDEAVAIHQRSDVCAVPAAAVVVETMVALVLARVTLEKFGGDSLAETRRNIEAYQRSVADREAPAARARAIRG</sequence>
<proteinExistence type="inferred from homology"/>
<feature type="chain" id="PRO_0000322415" description="Chorismate synthase">
    <location>
        <begin position="1"/>
        <end position="407"/>
    </location>
</feature>
<feature type="region of interest" description="Disordered" evidence="2">
    <location>
        <begin position="275"/>
        <end position="308"/>
    </location>
</feature>
<feature type="compositionally biased region" description="Basic and acidic residues" evidence="2">
    <location>
        <begin position="275"/>
        <end position="284"/>
    </location>
</feature>
<feature type="binding site" evidence="1">
    <location>
        <position position="40"/>
    </location>
    <ligand>
        <name>NADP(+)</name>
        <dbReference type="ChEBI" id="CHEBI:58349"/>
    </ligand>
</feature>
<feature type="binding site" evidence="1">
    <location>
        <position position="46"/>
    </location>
    <ligand>
        <name>NADP(+)</name>
        <dbReference type="ChEBI" id="CHEBI:58349"/>
    </ligand>
</feature>
<feature type="binding site" evidence="1">
    <location>
        <begin position="138"/>
        <end position="140"/>
    </location>
    <ligand>
        <name>FMN</name>
        <dbReference type="ChEBI" id="CHEBI:58210"/>
    </ligand>
</feature>
<feature type="binding site" evidence="1">
    <location>
        <begin position="259"/>
        <end position="260"/>
    </location>
    <ligand>
        <name>FMN</name>
        <dbReference type="ChEBI" id="CHEBI:58210"/>
    </ligand>
</feature>
<feature type="binding site" evidence="1">
    <location>
        <position position="303"/>
    </location>
    <ligand>
        <name>FMN</name>
        <dbReference type="ChEBI" id="CHEBI:58210"/>
    </ligand>
</feature>
<feature type="binding site" evidence="1">
    <location>
        <begin position="318"/>
        <end position="322"/>
    </location>
    <ligand>
        <name>FMN</name>
        <dbReference type="ChEBI" id="CHEBI:58210"/>
    </ligand>
</feature>
<feature type="binding site" evidence="1">
    <location>
        <position position="344"/>
    </location>
    <ligand>
        <name>FMN</name>
        <dbReference type="ChEBI" id="CHEBI:58210"/>
    </ligand>
</feature>
<protein>
    <recommendedName>
        <fullName evidence="1">Chorismate synthase</fullName>
        <shortName evidence="1">CS</shortName>
        <ecNumber evidence="1">4.2.3.5</ecNumber>
    </recommendedName>
    <alternativeName>
        <fullName evidence="1">5-enolpyruvylshikimate-3-phosphate phospholyase</fullName>
    </alternativeName>
</protein>
<comment type="function">
    <text evidence="1">Catalyzes the anti-1,4-elimination of the C-3 phosphate and the C-6 proR hydrogen from 5-enolpyruvylshikimate-3-phosphate (EPSP) to yield chorismate, which is the branch point compound that serves as the starting substrate for the three terminal pathways of aromatic amino acid biosynthesis. This reaction introduces a second double bond into the aromatic ring system.</text>
</comment>
<comment type="catalytic activity">
    <reaction evidence="1">
        <text>5-O-(1-carboxyvinyl)-3-phosphoshikimate = chorismate + phosphate</text>
        <dbReference type="Rhea" id="RHEA:21020"/>
        <dbReference type="ChEBI" id="CHEBI:29748"/>
        <dbReference type="ChEBI" id="CHEBI:43474"/>
        <dbReference type="ChEBI" id="CHEBI:57701"/>
        <dbReference type="EC" id="4.2.3.5"/>
    </reaction>
</comment>
<comment type="cofactor">
    <cofactor evidence="1">
        <name>FMNH2</name>
        <dbReference type="ChEBI" id="CHEBI:57618"/>
    </cofactor>
    <text evidence="1">Reduced FMN (FMNH(2)).</text>
</comment>
<comment type="pathway">
    <text evidence="1">Metabolic intermediate biosynthesis; chorismate biosynthesis; chorismate from D-erythrose 4-phosphate and phosphoenolpyruvate: step 7/7.</text>
</comment>
<comment type="subunit">
    <text evidence="1">Homotetramer.</text>
</comment>
<comment type="similarity">
    <text evidence="1">Belongs to the chorismate synthase family.</text>
</comment>
<reference key="1">
    <citation type="journal article" date="2007" name="Genome Res.">
        <title>Reductive evolution and niche adaptation inferred from the genome of Mycobacterium ulcerans, the causative agent of Buruli ulcer.</title>
        <authorList>
            <person name="Stinear T.P."/>
            <person name="Seemann T."/>
            <person name="Pidot S."/>
            <person name="Frigui W."/>
            <person name="Reysset G."/>
            <person name="Garnier T."/>
            <person name="Meurice G."/>
            <person name="Simon D."/>
            <person name="Bouchier C."/>
            <person name="Ma L."/>
            <person name="Tichit M."/>
            <person name="Porter J.L."/>
            <person name="Ryan J."/>
            <person name="Johnson P.D.R."/>
            <person name="Davies J.K."/>
            <person name="Jenkin G.A."/>
            <person name="Small P.L.C."/>
            <person name="Jones L.M."/>
            <person name="Tekaia F."/>
            <person name="Laval F."/>
            <person name="Daffe M."/>
            <person name="Parkhill J."/>
            <person name="Cole S.T."/>
        </authorList>
    </citation>
    <scope>NUCLEOTIDE SEQUENCE [LARGE SCALE GENOMIC DNA]</scope>
    <source>
        <strain>Agy99</strain>
    </source>
</reference>
<evidence type="ECO:0000255" key="1">
    <source>
        <dbReference type="HAMAP-Rule" id="MF_00300"/>
    </source>
</evidence>
<evidence type="ECO:0000256" key="2">
    <source>
        <dbReference type="SAM" id="MobiDB-lite"/>
    </source>
</evidence>
<keyword id="KW-0028">Amino-acid biosynthesis</keyword>
<keyword id="KW-0057">Aromatic amino acid biosynthesis</keyword>
<keyword id="KW-0274">FAD</keyword>
<keyword id="KW-0285">Flavoprotein</keyword>
<keyword id="KW-0288">FMN</keyword>
<keyword id="KW-0456">Lyase</keyword>
<keyword id="KW-0521">NADP</keyword>
<organism>
    <name type="scientific">Mycobacterium ulcerans (strain Agy99)</name>
    <dbReference type="NCBI Taxonomy" id="362242"/>
    <lineage>
        <taxon>Bacteria</taxon>
        <taxon>Bacillati</taxon>
        <taxon>Actinomycetota</taxon>
        <taxon>Actinomycetes</taxon>
        <taxon>Mycobacteriales</taxon>
        <taxon>Mycobacteriaceae</taxon>
        <taxon>Mycobacterium</taxon>
        <taxon>Mycobacterium ulcerans group</taxon>
    </lineage>
</organism>